<gene>
    <name type="primary">Vipas39</name>
    <name type="synonym">Spe39</name>
    <name type="synonym">Vipar</name>
</gene>
<name>SPE39_MOUSE</name>
<keyword id="KW-0025">Alternative splicing</keyword>
<keyword id="KW-0963">Cytoplasm</keyword>
<keyword id="KW-0968">Cytoplasmic vesicle</keyword>
<keyword id="KW-0221">Differentiation</keyword>
<keyword id="KW-0967">Endosome</keyword>
<keyword id="KW-0597">Phosphoprotein</keyword>
<keyword id="KW-0653">Protein transport</keyword>
<keyword id="KW-1185">Reference proteome</keyword>
<keyword id="KW-0744">Spermatogenesis</keyword>
<keyword id="KW-0804">Transcription</keyword>
<keyword id="KW-0805">Transcription regulation</keyword>
<keyword id="KW-0813">Transport</keyword>
<reference key="1">
    <citation type="journal article" date="2005" name="Science">
        <title>The transcriptional landscape of the mammalian genome.</title>
        <authorList>
            <person name="Carninci P."/>
            <person name="Kasukawa T."/>
            <person name="Katayama S."/>
            <person name="Gough J."/>
            <person name="Frith M.C."/>
            <person name="Maeda N."/>
            <person name="Oyama R."/>
            <person name="Ravasi T."/>
            <person name="Lenhard B."/>
            <person name="Wells C."/>
            <person name="Kodzius R."/>
            <person name="Shimokawa K."/>
            <person name="Bajic V.B."/>
            <person name="Brenner S.E."/>
            <person name="Batalov S."/>
            <person name="Forrest A.R."/>
            <person name="Zavolan M."/>
            <person name="Davis M.J."/>
            <person name="Wilming L.G."/>
            <person name="Aidinis V."/>
            <person name="Allen J.E."/>
            <person name="Ambesi-Impiombato A."/>
            <person name="Apweiler R."/>
            <person name="Aturaliya R.N."/>
            <person name="Bailey T.L."/>
            <person name="Bansal M."/>
            <person name="Baxter L."/>
            <person name="Beisel K.W."/>
            <person name="Bersano T."/>
            <person name="Bono H."/>
            <person name="Chalk A.M."/>
            <person name="Chiu K.P."/>
            <person name="Choudhary V."/>
            <person name="Christoffels A."/>
            <person name="Clutterbuck D.R."/>
            <person name="Crowe M.L."/>
            <person name="Dalla E."/>
            <person name="Dalrymple B.P."/>
            <person name="de Bono B."/>
            <person name="Della Gatta G."/>
            <person name="di Bernardo D."/>
            <person name="Down T."/>
            <person name="Engstrom P."/>
            <person name="Fagiolini M."/>
            <person name="Faulkner G."/>
            <person name="Fletcher C.F."/>
            <person name="Fukushima T."/>
            <person name="Furuno M."/>
            <person name="Futaki S."/>
            <person name="Gariboldi M."/>
            <person name="Georgii-Hemming P."/>
            <person name="Gingeras T.R."/>
            <person name="Gojobori T."/>
            <person name="Green R.E."/>
            <person name="Gustincich S."/>
            <person name="Harbers M."/>
            <person name="Hayashi Y."/>
            <person name="Hensch T.K."/>
            <person name="Hirokawa N."/>
            <person name="Hill D."/>
            <person name="Huminiecki L."/>
            <person name="Iacono M."/>
            <person name="Ikeo K."/>
            <person name="Iwama A."/>
            <person name="Ishikawa T."/>
            <person name="Jakt M."/>
            <person name="Kanapin A."/>
            <person name="Katoh M."/>
            <person name="Kawasawa Y."/>
            <person name="Kelso J."/>
            <person name="Kitamura H."/>
            <person name="Kitano H."/>
            <person name="Kollias G."/>
            <person name="Krishnan S.P."/>
            <person name="Kruger A."/>
            <person name="Kummerfeld S.K."/>
            <person name="Kurochkin I.V."/>
            <person name="Lareau L.F."/>
            <person name="Lazarevic D."/>
            <person name="Lipovich L."/>
            <person name="Liu J."/>
            <person name="Liuni S."/>
            <person name="McWilliam S."/>
            <person name="Madan Babu M."/>
            <person name="Madera M."/>
            <person name="Marchionni L."/>
            <person name="Matsuda H."/>
            <person name="Matsuzawa S."/>
            <person name="Miki H."/>
            <person name="Mignone F."/>
            <person name="Miyake S."/>
            <person name="Morris K."/>
            <person name="Mottagui-Tabar S."/>
            <person name="Mulder N."/>
            <person name="Nakano N."/>
            <person name="Nakauchi H."/>
            <person name="Ng P."/>
            <person name="Nilsson R."/>
            <person name="Nishiguchi S."/>
            <person name="Nishikawa S."/>
            <person name="Nori F."/>
            <person name="Ohara O."/>
            <person name="Okazaki Y."/>
            <person name="Orlando V."/>
            <person name="Pang K.C."/>
            <person name="Pavan W.J."/>
            <person name="Pavesi G."/>
            <person name="Pesole G."/>
            <person name="Petrovsky N."/>
            <person name="Piazza S."/>
            <person name="Reed J."/>
            <person name="Reid J.F."/>
            <person name="Ring B.Z."/>
            <person name="Ringwald M."/>
            <person name="Rost B."/>
            <person name="Ruan Y."/>
            <person name="Salzberg S.L."/>
            <person name="Sandelin A."/>
            <person name="Schneider C."/>
            <person name="Schoenbach C."/>
            <person name="Sekiguchi K."/>
            <person name="Semple C.A."/>
            <person name="Seno S."/>
            <person name="Sessa L."/>
            <person name="Sheng Y."/>
            <person name="Shibata Y."/>
            <person name="Shimada H."/>
            <person name="Shimada K."/>
            <person name="Silva D."/>
            <person name="Sinclair B."/>
            <person name="Sperling S."/>
            <person name="Stupka E."/>
            <person name="Sugiura K."/>
            <person name="Sultana R."/>
            <person name="Takenaka Y."/>
            <person name="Taki K."/>
            <person name="Tammoja K."/>
            <person name="Tan S.L."/>
            <person name="Tang S."/>
            <person name="Taylor M.S."/>
            <person name="Tegner J."/>
            <person name="Teichmann S.A."/>
            <person name="Ueda H.R."/>
            <person name="van Nimwegen E."/>
            <person name="Verardo R."/>
            <person name="Wei C.L."/>
            <person name="Yagi K."/>
            <person name="Yamanishi H."/>
            <person name="Zabarovsky E."/>
            <person name="Zhu S."/>
            <person name="Zimmer A."/>
            <person name="Hide W."/>
            <person name="Bult C."/>
            <person name="Grimmond S.M."/>
            <person name="Teasdale R.D."/>
            <person name="Liu E.T."/>
            <person name="Brusic V."/>
            <person name="Quackenbush J."/>
            <person name="Wahlestedt C."/>
            <person name="Mattick J.S."/>
            <person name="Hume D.A."/>
            <person name="Kai C."/>
            <person name="Sasaki D."/>
            <person name="Tomaru Y."/>
            <person name="Fukuda S."/>
            <person name="Kanamori-Katayama M."/>
            <person name="Suzuki M."/>
            <person name="Aoki J."/>
            <person name="Arakawa T."/>
            <person name="Iida J."/>
            <person name="Imamura K."/>
            <person name="Itoh M."/>
            <person name="Kato T."/>
            <person name="Kawaji H."/>
            <person name="Kawagashira N."/>
            <person name="Kawashima T."/>
            <person name="Kojima M."/>
            <person name="Kondo S."/>
            <person name="Konno H."/>
            <person name="Nakano K."/>
            <person name="Ninomiya N."/>
            <person name="Nishio T."/>
            <person name="Okada M."/>
            <person name="Plessy C."/>
            <person name="Shibata K."/>
            <person name="Shiraki T."/>
            <person name="Suzuki S."/>
            <person name="Tagami M."/>
            <person name="Waki K."/>
            <person name="Watahiki A."/>
            <person name="Okamura-Oho Y."/>
            <person name="Suzuki H."/>
            <person name="Kawai J."/>
            <person name="Hayashizaki Y."/>
        </authorList>
    </citation>
    <scope>NUCLEOTIDE SEQUENCE [LARGE SCALE MRNA] (ISOFORM 1)</scope>
    <source>
        <strain>C57BL/6J</strain>
        <tissue>Brain</tissue>
        <tissue>Cerebellum</tissue>
        <tissue>Diencephalon</tissue>
        <tissue>Spinal cord</tissue>
    </source>
</reference>
<reference key="2">
    <citation type="journal article" date="2004" name="Genome Res.">
        <title>The status, quality, and expansion of the NIH full-length cDNA project: the Mammalian Gene Collection (MGC).</title>
        <authorList>
            <consortium name="The MGC Project Team"/>
        </authorList>
    </citation>
    <scope>NUCLEOTIDE SEQUENCE [LARGE SCALE MRNA] (ISOFORM 2)</scope>
    <source>
        <strain>FVB/N</strain>
        <tissue>Mammary tumor</tissue>
    </source>
</reference>
<reference key="3">
    <citation type="journal article" date="2004" name="Mol. Cell. Proteomics">
        <title>Phosphoproteomic analysis of the developing mouse brain.</title>
        <authorList>
            <person name="Ballif B.A."/>
            <person name="Villen J."/>
            <person name="Beausoleil S.A."/>
            <person name="Schwartz D."/>
            <person name="Gygi S.P."/>
        </authorList>
    </citation>
    <scope>PHOSPHORYLATION [LARGE SCALE ANALYSIS] AT THR-21</scope>
    <scope>IDENTIFICATION BY MASS SPECTROMETRY [LARGE SCALE ANALYSIS]</scope>
    <source>
        <tissue>Embryonic brain</tissue>
    </source>
</reference>
<reference key="4">
    <citation type="journal article" date="2007" name="Proc. Natl. Acad. Sci. U.S.A.">
        <title>Large-scale phosphorylation analysis of mouse liver.</title>
        <authorList>
            <person name="Villen J."/>
            <person name="Beausoleil S.A."/>
            <person name="Gerber S.A."/>
            <person name="Gygi S.P."/>
        </authorList>
    </citation>
    <scope>PHOSPHORYLATION [LARGE SCALE ANALYSIS] AT SER-122</scope>
    <scope>IDENTIFICATION BY MASS SPECTROMETRY [LARGE SCALE ANALYSIS]</scope>
    <source>
        <tissue>Liver</tissue>
    </source>
</reference>
<reference key="5">
    <citation type="journal article" date="2010" name="Cell">
        <title>A tissue-specific atlas of mouse protein phosphorylation and expression.</title>
        <authorList>
            <person name="Huttlin E.L."/>
            <person name="Jedrychowski M.P."/>
            <person name="Elias J.E."/>
            <person name="Goswami T."/>
            <person name="Rad R."/>
            <person name="Beausoleil S.A."/>
            <person name="Villen J."/>
            <person name="Haas W."/>
            <person name="Sowa M.E."/>
            <person name="Gygi S.P."/>
        </authorList>
    </citation>
    <scope>PHOSPHORYLATION [LARGE SCALE ANALYSIS] AT THR-21; THR-115; SER-119 AND SER-122</scope>
    <scope>IDENTIFICATION BY MASS SPECTROMETRY [LARGE SCALE ANALYSIS]</scope>
    <source>
        <tissue>Brain</tissue>
        <tissue>Brown adipose tissue</tissue>
        <tissue>Heart</tissue>
        <tissue>Kidney</tissue>
        <tissue>Liver</tissue>
        <tissue>Lung</tissue>
        <tissue>Pancreas</tissue>
        <tissue>Spleen</tissue>
        <tissue>Testis</tissue>
    </source>
</reference>
<reference key="6">
    <citation type="journal article" date="2010" name="Nat. Genet.">
        <title>Mutations in VIPAR cause an arthrogryposis, renal dysfunction and cholestasis syndrome phenotype with defects in epithelial polarization.</title>
        <authorList>
            <person name="Cullinane A.R."/>
            <person name="Straatman-Iwanowska A."/>
            <person name="Zaucker A."/>
            <person name="Wakabayashi Y."/>
            <person name="Bruce C.K."/>
            <person name="Luo G."/>
            <person name="Rahman F."/>
            <person name="Gurakan F."/>
            <person name="Utine E."/>
            <person name="Ozkan T.B."/>
            <person name="Denecke J."/>
            <person name="Vukovic J."/>
            <person name="Di Rocco M."/>
            <person name="Mandel H."/>
            <person name="Cangul H."/>
            <person name="Matthews R.P."/>
            <person name="Thomas S.G."/>
            <person name="Rappoport J.Z."/>
            <person name="Arias I.M."/>
            <person name="Wolburg H."/>
            <person name="Knisely A.S."/>
            <person name="Kelly D.A."/>
            <person name="Muller F."/>
            <person name="Maher E.R."/>
            <person name="Gissen P."/>
        </authorList>
    </citation>
    <scope>FUNCTION</scope>
    <scope>INTERACTION WITH RAB11A</scope>
    <scope>KNOCKDOWN</scope>
</reference>
<sequence>MNRTKGDEEEYWNSSKFKAFTFDDEDDELSQLKESKRAVNSLRDIVDDDDDDDLERVSWTGEPVGSISWSIKETAGSSGSTPEGREQLKGRNSFYTQLPKPPSTYSLSSFFRGRTRPGSFQSLSDALSDTPAKSYAPELGRPKGEYRDYSNDWSLSDTVQRLRRGKVCSLERFRSLQDKLQLLEEAVSMHDGNVITAVLIFLKRTLSKEILFRELEVRQVALRHLIHFLKEIGDQKLLLDLFRFLDRAEELALSHYREHLNIQDPEKRKEFLKTCIGLPFSAEDAAHVQDHYTLLERQIIIEANDRHLESSGQTDIFRKHPRKASILNMPLVTTLFYACFYHYTESEGTFSSPINLKKTFKIPDKQYVLTALAARAKLRAWNDVDALFTTKNWLGYTKKRAPIGFHRVVEILHKNSAPVQILQEYVNLVEDVDTKLNLATKFKCHDVVIDTCRDLKDRQQLLAYRSKVDKGSAEEEKIDAILSSSQIRWKN</sequence>
<organism>
    <name type="scientific">Mus musculus</name>
    <name type="common">Mouse</name>
    <dbReference type="NCBI Taxonomy" id="10090"/>
    <lineage>
        <taxon>Eukaryota</taxon>
        <taxon>Metazoa</taxon>
        <taxon>Chordata</taxon>
        <taxon>Craniata</taxon>
        <taxon>Vertebrata</taxon>
        <taxon>Euteleostomi</taxon>
        <taxon>Mammalia</taxon>
        <taxon>Eutheria</taxon>
        <taxon>Euarchontoglires</taxon>
        <taxon>Glires</taxon>
        <taxon>Rodentia</taxon>
        <taxon>Myomorpha</taxon>
        <taxon>Muroidea</taxon>
        <taxon>Muridae</taxon>
        <taxon>Murinae</taxon>
        <taxon>Mus</taxon>
        <taxon>Mus</taxon>
    </lineage>
</organism>
<accession>Q8BGQ1</accession>
<accession>Q8BL55</accession>
<accession>Q8CIK4</accession>
<accession>Q91YI3</accession>
<feature type="chain" id="PRO_0000089936" description="Spermatogenesis-defective protein 39 homolog">
    <location>
        <begin position="1"/>
        <end position="491"/>
    </location>
</feature>
<feature type="region of interest" description="Disordered" evidence="4">
    <location>
        <begin position="72"/>
        <end position="101"/>
    </location>
</feature>
<feature type="region of interest" description="Disordered" evidence="4">
    <location>
        <begin position="121"/>
        <end position="141"/>
    </location>
</feature>
<feature type="compositionally biased region" description="Polar residues" evidence="4">
    <location>
        <begin position="72"/>
        <end position="81"/>
    </location>
</feature>
<feature type="modified residue" description="Phosphothreonine" evidence="8 10">
    <location>
        <position position="21"/>
    </location>
</feature>
<feature type="modified residue" description="Phosphothreonine" evidence="10">
    <location>
        <position position="115"/>
    </location>
</feature>
<feature type="modified residue" description="Phosphoserine" evidence="10">
    <location>
        <position position="119"/>
    </location>
</feature>
<feature type="modified residue" description="Phosphoserine" evidence="9 10">
    <location>
        <position position="122"/>
    </location>
</feature>
<feature type="modified residue" description="Phosphoserine" evidence="3">
    <location>
        <position position="128"/>
    </location>
</feature>
<feature type="modified residue" description="Phosphothreonine" evidence="3">
    <location>
        <position position="130"/>
    </location>
</feature>
<feature type="splice variant" id="VSP_009285" description="In isoform 2." evidence="6">
    <location>
        <begin position="148"/>
        <end position="166"/>
    </location>
</feature>
<feature type="sequence conflict" description="In Ref. 1; BAC32680." evidence="7" ref="1">
    <original>P</original>
    <variation>R</variation>
    <location>
        <position position="131"/>
    </location>
</feature>
<feature type="sequence conflict" description="In Ref. 2; AAH16646." evidence="7" ref="2">
    <original>I</original>
    <variation>V</variation>
    <location>
        <position position="316"/>
    </location>
</feature>
<dbReference type="EMBL" id="AK046322">
    <property type="protein sequence ID" value="BAC32680.1"/>
    <property type="molecule type" value="mRNA"/>
</dbReference>
<dbReference type="EMBL" id="AK049643">
    <property type="protein sequence ID" value="BAC33854.1"/>
    <property type="molecule type" value="mRNA"/>
</dbReference>
<dbReference type="EMBL" id="AK079055">
    <property type="protein sequence ID" value="BAC37516.1"/>
    <property type="molecule type" value="mRNA"/>
</dbReference>
<dbReference type="EMBL" id="AK082261">
    <property type="protein sequence ID" value="BAC38449.1"/>
    <property type="molecule type" value="mRNA"/>
</dbReference>
<dbReference type="EMBL" id="BC016646">
    <property type="protein sequence ID" value="AAH16646.1"/>
    <property type="molecule type" value="mRNA"/>
</dbReference>
<dbReference type="EMBL" id="BC023716">
    <property type="protein sequence ID" value="AAH23716.1"/>
    <property type="molecule type" value="mRNA"/>
</dbReference>
<dbReference type="CCDS" id="CCDS26074.1">
    <molecule id="Q8BGQ1-2"/>
</dbReference>
<dbReference type="CCDS" id="CCDS49119.1">
    <molecule id="Q8BGQ1-1"/>
</dbReference>
<dbReference type="RefSeq" id="NP_001136052.1">
    <molecule id="Q8BGQ1-1"/>
    <property type="nucleotide sequence ID" value="NM_001142580.1"/>
</dbReference>
<dbReference type="RefSeq" id="NP_001136053.1">
    <molecule id="Q8BGQ1-2"/>
    <property type="nucleotide sequence ID" value="NM_001142581.1"/>
</dbReference>
<dbReference type="RefSeq" id="NP_598805.2">
    <molecule id="Q8BGQ1-2"/>
    <property type="nucleotide sequence ID" value="NM_134044.3"/>
</dbReference>
<dbReference type="RefSeq" id="XP_006515402.1">
    <molecule id="Q8BGQ1-1"/>
    <property type="nucleotide sequence ID" value="XM_006515339.5"/>
</dbReference>
<dbReference type="RefSeq" id="XP_011242278.1">
    <molecule id="Q8BGQ1-1"/>
    <property type="nucleotide sequence ID" value="XM_011243976.4"/>
</dbReference>
<dbReference type="SMR" id="Q8BGQ1"/>
<dbReference type="BioGRID" id="222705">
    <property type="interactions" value="8"/>
</dbReference>
<dbReference type="FunCoup" id="Q8BGQ1">
    <property type="interactions" value="4349"/>
</dbReference>
<dbReference type="IntAct" id="Q8BGQ1">
    <property type="interactions" value="1"/>
</dbReference>
<dbReference type="MINT" id="Q8BGQ1"/>
<dbReference type="STRING" id="10090.ENSMUSP00000072527"/>
<dbReference type="GlyGen" id="Q8BGQ1">
    <property type="glycosylation" value="2 sites, 2 N-linked glycans (2 sites)"/>
</dbReference>
<dbReference type="iPTMnet" id="Q8BGQ1"/>
<dbReference type="PhosphoSitePlus" id="Q8BGQ1"/>
<dbReference type="jPOST" id="Q8BGQ1"/>
<dbReference type="PaxDb" id="10090-ENSMUSP00000072527"/>
<dbReference type="PeptideAtlas" id="Q8BGQ1"/>
<dbReference type="ProteomicsDB" id="257342">
    <molecule id="Q8BGQ1-1"/>
</dbReference>
<dbReference type="ProteomicsDB" id="257343">
    <molecule id="Q8BGQ1-2"/>
</dbReference>
<dbReference type="Pumba" id="Q8BGQ1"/>
<dbReference type="Antibodypedia" id="26048">
    <property type="antibodies" value="119 antibodies from 22 providers"/>
</dbReference>
<dbReference type="DNASU" id="104799"/>
<dbReference type="Ensembl" id="ENSMUST00000021426.10">
    <molecule id="Q8BGQ1-2"/>
    <property type="protein sequence ID" value="ENSMUSP00000021426.10"/>
    <property type="gene ID" value="ENSMUSG00000021038.18"/>
</dbReference>
<dbReference type="Ensembl" id="ENSMUST00000072744.15">
    <molecule id="Q8BGQ1-1"/>
    <property type="protein sequence ID" value="ENSMUSP00000072527.8"/>
    <property type="gene ID" value="ENSMUSG00000021038.18"/>
</dbReference>
<dbReference type="Ensembl" id="ENSMUST00000179379.9">
    <molecule id="Q8BGQ1-2"/>
    <property type="protein sequence ID" value="ENSMUSP00000137190.2"/>
    <property type="gene ID" value="ENSMUSG00000021038.18"/>
</dbReference>
<dbReference type="GeneID" id="104799"/>
<dbReference type="KEGG" id="mmu:104799"/>
<dbReference type="UCSC" id="uc007oip.2">
    <molecule id="Q8BGQ1-2"/>
    <property type="organism name" value="mouse"/>
</dbReference>
<dbReference type="UCSC" id="uc007oiq.2">
    <molecule id="Q8BGQ1-1"/>
    <property type="organism name" value="mouse"/>
</dbReference>
<dbReference type="AGR" id="MGI:2144805"/>
<dbReference type="CTD" id="63894"/>
<dbReference type="MGI" id="MGI:2144805">
    <property type="gene designation" value="Vipas39"/>
</dbReference>
<dbReference type="VEuPathDB" id="HostDB:ENSMUSG00000021038"/>
<dbReference type="eggNOG" id="KOG4677">
    <property type="taxonomic scope" value="Eukaryota"/>
</dbReference>
<dbReference type="GeneTree" id="ENSGT00390000013955"/>
<dbReference type="HOGENOM" id="CLU_029487_0_0_1"/>
<dbReference type="InParanoid" id="Q8BGQ1"/>
<dbReference type="OMA" id="PEMVIEC"/>
<dbReference type="OrthoDB" id="9977282at2759"/>
<dbReference type="PhylomeDB" id="Q8BGQ1"/>
<dbReference type="TreeFam" id="TF319640"/>
<dbReference type="BioGRID-ORCS" id="104799">
    <property type="hits" value="8 hits in 76 CRISPR screens"/>
</dbReference>
<dbReference type="ChiTaRS" id="Vipas39">
    <property type="organism name" value="mouse"/>
</dbReference>
<dbReference type="PRO" id="PR:Q8BGQ1"/>
<dbReference type="Proteomes" id="UP000000589">
    <property type="component" value="Chromosome 12"/>
</dbReference>
<dbReference type="RNAct" id="Q8BGQ1">
    <property type="molecule type" value="protein"/>
</dbReference>
<dbReference type="Bgee" id="ENSMUSG00000021038">
    <property type="expression patterns" value="Expressed in saccule of membranous labyrinth and 256 other cell types or tissues"/>
</dbReference>
<dbReference type="GO" id="GO:0005737">
    <property type="term" value="C:cytoplasm"/>
    <property type="evidence" value="ECO:0000250"/>
    <property type="project" value="UniProtKB"/>
</dbReference>
<dbReference type="GO" id="GO:0005769">
    <property type="term" value="C:early endosome"/>
    <property type="evidence" value="ECO:0007669"/>
    <property type="project" value="UniProtKB-SubCell"/>
</dbReference>
<dbReference type="GO" id="GO:0005794">
    <property type="term" value="C:Golgi apparatus"/>
    <property type="evidence" value="ECO:0000266"/>
    <property type="project" value="MGI"/>
</dbReference>
<dbReference type="GO" id="GO:0005770">
    <property type="term" value="C:late endosome"/>
    <property type="evidence" value="ECO:0007669"/>
    <property type="project" value="UniProtKB-SubCell"/>
</dbReference>
<dbReference type="GO" id="GO:0055037">
    <property type="term" value="C:recycling endosome"/>
    <property type="evidence" value="ECO:0007669"/>
    <property type="project" value="UniProtKB-SubCell"/>
</dbReference>
<dbReference type="GO" id="GO:0099023">
    <property type="term" value="C:vesicle tethering complex"/>
    <property type="evidence" value="ECO:0007669"/>
    <property type="project" value="Ensembl"/>
</dbReference>
<dbReference type="GO" id="GO:0044877">
    <property type="term" value="F:protein-containing complex binding"/>
    <property type="evidence" value="ECO:0007669"/>
    <property type="project" value="Ensembl"/>
</dbReference>
<dbReference type="GO" id="GO:0030154">
    <property type="term" value="P:cell differentiation"/>
    <property type="evidence" value="ECO:0007669"/>
    <property type="project" value="UniProtKB-KW"/>
</dbReference>
<dbReference type="GO" id="GO:0030199">
    <property type="term" value="P:collagen fibril organization"/>
    <property type="evidence" value="ECO:0000315"/>
    <property type="project" value="MGI"/>
</dbReference>
<dbReference type="GO" id="GO:0032963">
    <property type="term" value="P:collagen metabolic process"/>
    <property type="evidence" value="ECO:0000315"/>
    <property type="project" value="MGI"/>
</dbReference>
<dbReference type="GO" id="GO:0008333">
    <property type="term" value="P:endosome to lysosome transport"/>
    <property type="evidence" value="ECO:0007669"/>
    <property type="project" value="Ensembl"/>
</dbReference>
<dbReference type="GO" id="GO:0006886">
    <property type="term" value="P:intracellular protein transport"/>
    <property type="evidence" value="ECO:0000315"/>
    <property type="project" value="MGI"/>
</dbReference>
<dbReference type="GO" id="GO:0043687">
    <property type="term" value="P:post-translational protein modification"/>
    <property type="evidence" value="ECO:0000315"/>
    <property type="project" value="MGI"/>
</dbReference>
<dbReference type="GO" id="GO:0007283">
    <property type="term" value="P:spermatogenesis"/>
    <property type="evidence" value="ECO:0007669"/>
    <property type="project" value="UniProtKB-KW"/>
</dbReference>
<dbReference type="InterPro" id="IPR040057">
    <property type="entry name" value="Spe-39"/>
</dbReference>
<dbReference type="InterPro" id="IPR006925">
    <property type="entry name" value="Vps16_C"/>
</dbReference>
<dbReference type="PANTHER" id="PTHR13364">
    <property type="entry name" value="DEFECTIVE SPERMATOGENESIS PROTEIN 39"/>
    <property type="match status" value="1"/>
</dbReference>
<dbReference type="PANTHER" id="PTHR13364:SF6">
    <property type="entry name" value="SPERMATOGENESIS-DEFECTIVE PROTEIN 39 HOMOLOG"/>
    <property type="match status" value="1"/>
</dbReference>
<dbReference type="Pfam" id="PF04840">
    <property type="entry name" value="Vps16_C"/>
    <property type="match status" value="1"/>
</dbReference>
<proteinExistence type="evidence at protein level"/>
<comment type="function">
    <text evidence="2 3 5">Proposed to be involved in endosomal maturation implicating in part VPS33B. In epithelial cells, the VPS33B:VIPAS39 complex may play a role in the apical RAB11A-dependent recycling pathway and in the maintenance of the apical-basolateral polarity (PubMed:20190753). May play a role in lysosomal trafficking, probably via association with the core HOPS complex in a discrete population of endosomes; the functions seems to be independent of VPS33B (By similarity). May play a role in vesicular trafficking during spermatogenesis (By similarity). May be involved in direct or indirect transcriptional regulation of E-cadherin.</text>
</comment>
<comment type="subunit">
    <text evidence="3 5">Interacts with VPS33B (By similarity). Associates with the homotypic fusion and vacuole protein sorting (HOPS) complex; impaired by VPS33B (By similarity). Interacts with RAB11A (PubMed:20190753).</text>
</comment>
<comment type="subcellular location">
    <subcellularLocation>
        <location evidence="1">Cytoplasm</location>
    </subcellularLocation>
    <subcellularLocation>
        <location evidence="1">Cytoplasmic vesicle</location>
    </subcellularLocation>
    <subcellularLocation>
        <location evidence="3">Early endosome</location>
    </subcellularLocation>
    <subcellularLocation>
        <location evidence="3">Recycling endosome</location>
    </subcellularLocation>
    <subcellularLocation>
        <location evidence="3">Late endosome</location>
    </subcellularLocation>
    <text evidence="3">Colocalizes in clusters with VPS33B at cytoplasmic organelles.</text>
</comment>
<comment type="alternative products">
    <event type="alternative splicing"/>
    <isoform>
        <id>Q8BGQ1-1</id>
        <name>1</name>
        <sequence type="displayed"/>
    </isoform>
    <isoform>
        <id>Q8BGQ1-2</id>
        <name>2</name>
        <sequence type="described" ref="VSP_009285"/>
    </isoform>
</comment>
<comment type="miscellaneous">
    <text>Vipar-deficient inner medullary collecting duct cells display abnormal expression of membrane proteins such as Ceacam5, structural and functional tight junction defects and reduced E-cadherin expression.</text>
</comment>
<comment type="similarity">
    <text evidence="7">Belongs to the SPE39 family.</text>
</comment>
<protein>
    <recommendedName>
        <fullName>Spermatogenesis-defective protein 39 homolog</fullName>
        <shortName>hSPE-39</shortName>
    </recommendedName>
    <alternativeName>
        <fullName>VPS33B-interacting protein in apical-basolateral polarity regulator</fullName>
    </alternativeName>
    <alternativeName>
        <fullName>VPS33B-interacting protein in polarity and apical restriction</fullName>
    </alternativeName>
</protein>
<evidence type="ECO:0000250" key="1"/>
<evidence type="ECO:0000250" key="2">
    <source>
        <dbReference type="UniProtKB" id="Q23288"/>
    </source>
</evidence>
<evidence type="ECO:0000250" key="3">
    <source>
        <dbReference type="UniProtKB" id="Q9H9C1"/>
    </source>
</evidence>
<evidence type="ECO:0000256" key="4">
    <source>
        <dbReference type="SAM" id="MobiDB-lite"/>
    </source>
</evidence>
<evidence type="ECO:0000269" key="5">
    <source>
    </source>
</evidence>
<evidence type="ECO:0000303" key="6">
    <source>
    </source>
</evidence>
<evidence type="ECO:0000305" key="7"/>
<evidence type="ECO:0007744" key="8">
    <source>
    </source>
</evidence>
<evidence type="ECO:0007744" key="9">
    <source>
    </source>
</evidence>
<evidence type="ECO:0007744" key="10">
    <source>
    </source>
</evidence>